<keyword id="KW-0028">Amino-acid biosynthesis</keyword>
<keyword id="KW-0368">Histidine biosynthesis</keyword>
<keyword id="KW-0378">Hydrolase</keyword>
<keyword id="KW-0486">Methionine biosynthesis</keyword>
<keyword id="KW-0511">Multifunctional enzyme</keyword>
<keyword id="KW-0521">NADP</keyword>
<keyword id="KW-0554">One-carbon metabolism</keyword>
<keyword id="KW-0560">Oxidoreductase</keyword>
<keyword id="KW-0658">Purine biosynthesis</keyword>
<gene>
    <name evidence="1" type="primary">folD1</name>
    <name type="ordered locus">Tcr_0723</name>
</gene>
<evidence type="ECO:0000255" key="1">
    <source>
        <dbReference type="HAMAP-Rule" id="MF_01576"/>
    </source>
</evidence>
<evidence type="ECO:0000305" key="2"/>
<reference key="1">
    <citation type="journal article" date="2006" name="PLoS Biol.">
        <title>The genome of deep-sea vent chemolithoautotroph Thiomicrospira crunogena XCL-2.</title>
        <authorList>
            <person name="Scott K.M."/>
            <person name="Sievert S.M."/>
            <person name="Abril F.N."/>
            <person name="Ball L.A."/>
            <person name="Barrett C.J."/>
            <person name="Blake R.A."/>
            <person name="Boller A.J."/>
            <person name="Chain P.S.G."/>
            <person name="Clark J.A."/>
            <person name="Davis C.R."/>
            <person name="Detter C."/>
            <person name="Do K.F."/>
            <person name="Dobrinski K.P."/>
            <person name="Faza B.I."/>
            <person name="Fitzpatrick K.A."/>
            <person name="Freyermuth S.K."/>
            <person name="Harmer T.L."/>
            <person name="Hauser L.J."/>
            <person name="Huegler M."/>
            <person name="Kerfeld C.A."/>
            <person name="Klotz M.G."/>
            <person name="Kong W.W."/>
            <person name="Land M."/>
            <person name="Lapidus A."/>
            <person name="Larimer F.W."/>
            <person name="Longo D.L."/>
            <person name="Lucas S."/>
            <person name="Malfatti S.A."/>
            <person name="Massey S.E."/>
            <person name="Martin D.D."/>
            <person name="McCuddin Z."/>
            <person name="Meyer F."/>
            <person name="Moore J.L."/>
            <person name="Ocampo L.H. Jr."/>
            <person name="Paul J.H."/>
            <person name="Paulsen I.T."/>
            <person name="Reep D.K."/>
            <person name="Ren Q."/>
            <person name="Ross R.L."/>
            <person name="Sato P.Y."/>
            <person name="Thomas P."/>
            <person name="Tinkham L.E."/>
            <person name="Zeruth G.T."/>
        </authorList>
    </citation>
    <scope>NUCLEOTIDE SEQUENCE [LARGE SCALE GENOMIC DNA]</scope>
    <source>
        <strain>DSM 25203 / XCL-2</strain>
    </source>
</reference>
<name>FOLD1_HYDCU</name>
<organism>
    <name type="scientific">Hydrogenovibrio crunogenus (strain DSM 25203 / XCL-2)</name>
    <name type="common">Thiomicrospira crunogena</name>
    <dbReference type="NCBI Taxonomy" id="317025"/>
    <lineage>
        <taxon>Bacteria</taxon>
        <taxon>Pseudomonadati</taxon>
        <taxon>Pseudomonadota</taxon>
        <taxon>Gammaproteobacteria</taxon>
        <taxon>Thiotrichales</taxon>
        <taxon>Piscirickettsiaceae</taxon>
        <taxon>Hydrogenovibrio</taxon>
    </lineage>
</organism>
<proteinExistence type="inferred from homology"/>
<accession>Q31HQ4</accession>
<protein>
    <recommendedName>
        <fullName evidence="1">Bifunctional protein FolD 1</fullName>
    </recommendedName>
    <domain>
        <recommendedName>
            <fullName evidence="1">Methylenetetrahydrofolate dehydrogenase</fullName>
            <ecNumber evidence="1">1.5.1.5</ecNumber>
        </recommendedName>
    </domain>
    <domain>
        <recommendedName>
            <fullName evidence="1">Methenyltetrahydrofolate cyclohydrolase</fullName>
            <ecNumber evidence="1">3.5.4.9</ecNumber>
        </recommendedName>
    </domain>
</protein>
<feature type="chain" id="PRO_0000268548" description="Bifunctional protein FolD 1">
    <location>
        <begin position="1"/>
        <end position="284"/>
    </location>
</feature>
<feature type="binding site" evidence="1">
    <location>
        <begin position="166"/>
        <end position="168"/>
    </location>
    <ligand>
        <name>NADP(+)</name>
        <dbReference type="ChEBI" id="CHEBI:58349"/>
    </ligand>
</feature>
<feature type="binding site" evidence="1">
    <location>
        <position position="191"/>
    </location>
    <ligand>
        <name>NADP(+)</name>
        <dbReference type="ChEBI" id="CHEBI:58349"/>
    </ligand>
</feature>
<feature type="binding site" evidence="1">
    <location>
        <position position="232"/>
    </location>
    <ligand>
        <name>NADP(+)</name>
        <dbReference type="ChEBI" id="CHEBI:58349"/>
    </ligand>
</feature>
<sequence length="284" mass="30154">MSAQILDGKAIALELRDSIQKEVEAQVANGKKPPGLAVILVGEDPASQVYVKNKKIACEKAGFNDVSMVLPAETSQAELLAKIDELNTRDDVHGIIVQLPVPDHIDPEEIIERIDPKKDVDGFHPYNMGRLATRLPELAPCTPHGVMTMLAKTGIPLRGLNAVVVGASNIVGVPMALELLNERATVTVCHSATKDLPQKVAEADLVVVGVGIPNMVKGDWIKDGAIVIDVGINRLDDGSLCGDVEYDVAKEKASWITPVPGGVGPMTIATLLQNTLQAAYGVKA</sequence>
<dbReference type="EC" id="1.5.1.5" evidence="1"/>
<dbReference type="EC" id="3.5.4.9" evidence="1"/>
<dbReference type="EMBL" id="CP000109">
    <property type="protein sequence ID" value="ABB41319.1"/>
    <property type="status" value="ALT_INIT"/>
    <property type="molecule type" value="Genomic_DNA"/>
</dbReference>
<dbReference type="SMR" id="Q31HQ4"/>
<dbReference type="STRING" id="317025.Tcr_0723"/>
<dbReference type="KEGG" id="tcx:Tcr_0723"/>
<dbReference type="eggNOG" id="COG0190">
    <property type="taxonomic scope" value="Bacteria"/>
</dbReference>
<dbReference type="HOGENOM" id="CLU_034045_2_1_6"/>
<dbReference type="OrthoDB" id="9803580at2"/>
<dbReference type="UniPathway" id="UPA00193"/>
<dbReference type="GO" id="GO:0005829">
    <property type="term" value="C:cytosol"/>
    <property type="evidence" value="ECO:0007669"/>
    <property type="project" value="TreeGrafter"/>
</dbReference>
<dbReference type="GO" id="GO:0004477">
    <property type="term" value="F:methenyltetrahydrofolate cyclohydrolase activity"/>
    <property type="evidence" value="ECO:0007669"/>
    <property type="project" value="UniProtKB-UniRule"/>
</dbReference>
<dbReference type="GO" id="GO:0004488">
    <property type="term" value="F:methylenetetrahydrofolate dehydrogenase (NADP+) activity"/>
    <property type="evidence" value="ECO:0007669"/>
    <property type="project" value="UniProtKB-UniRule"/>
</dbReference>
<dbReference type="GO" id="GO:0000105">
    <property type="term" value="P:L-histidine biosynthetic process"/>
    <property type="evidence" value="ECO:0007669"/>
    <property type="project" value="UniProtKB-KW"/>
</dbReference>
<dbReference type="GO" id="GO:0009086">
    <property type="term" value="P:methionine biosynthetic process"/>
    <property type="evidence" value="ECO:0007669"/>
    <property type="project" value="UniProtKB-KW"/>
</dbReference>
<dbReference type="GO" id="GO:0006164">
    <property type="term" value="P:purine nucleotide biosynthetic process"/>
    <property type="evidence" value="ECO:0007669"/>
    <property type="project" value="UniProtKB-KW"/>
</dbReference>
<dbReference type="GO" id="GO:0035999">
    <property type="term" value="P:tetrahydrofolate interconversion"/>
    <property type="evidence" value="ECO:0007669"/>
    <property type="project" value="UniProtKB-UniRule"/>
</dbReference>
<dbReference type="CDD" id="cd01080">
    <property type="entry name" value="NAD_bind_m-THF_DH_Cyclohyd"/>
    <property type="match status" value="1"/>
</dbReference>
<dbReference type="FunFam" id="3.40.50.10860:FF:000001">
    <property type="entry name" value="Bifunctional protein FolD"/>
    <property type="match status" value="1"/>
</dbReference>
<dbReference type="FunFam" id="3.40.50.720:FF:000006">
    <property type="entry name" value="Bifunctional protein FolD"/>
    <property type="match status" value="1"/>
</dbReference>
<dbReference type="Gene3D" id="3.40.50.10860">
    <property type="entry name" value="Leucine Dehydrogenase, chain A, domain 1"/>
    <property type="match status" value="1"/>
</dbReference>
<dbReference type="Gene3D" id="3.40.50.720">
    <property type="entry name" value="NAD(P)-binding Rossmann-like Domain"/>
    <property type="match status" value="1"/>
</dbReference>
<dbReference type="HAMAP" id="MF_01576">
    <property type="entry name" value="THF_DHG_CYH"/>
    <property type="match status" value="1"/>
</dbReference>
<dbReference type="InterPro" id="IPR046346">
    <property type="entry name" value="Aminoacid_DH-like_N_sf"/>
</dbReference>
<dbReference type="InterPro" id="IPR036291">
    <property type="entry name" value="NAD(P)-bd_dom_sf"/>
</dbReference>
<dbReference type="InterPro" id="IPR000672">
    <property type="entry name" value="THF_DH/CycHdrlase"/>
</dbReference>
<dbReference type="InterPro" id="IPR020630">
    <property type="entry name" value="THF_DH/CycHdrlase_cat_dom"/>
</dbReference>
<dbReference type="InterPro" id="IPR020867">
    <property type="entry name" value="THF_DH/CycHdrlase_CS"/>
</dbReference>
<dbReference type="InterPro" id="IPR020631">
    <property type="entry name" value="THF_DH/CycHdrlase_NAD-bd_dom"/>
</dbReference>
<dbReference type="NCBIfam" id="NF008058">
    <property type="entry name" value="PRK10792.1"/>
    <property type="match status" value="1"/>
</dbReference>
<dbReference type="NCBIfam" id="NF010783">
    <property type="entry name" value="PRK14186.1"/>
    <property type="match status" value="1"/>
</dbReference>
<dbReference type="PANTHER" id="PTHR48099:SF5">
    <property type="entry name" value="C-1-TETRAHYDROFOLATE SYNTHASE, CYTOPLASMIC"/>
    <property type="match status" value="1"/>
</dbReference>
<dbReference type="PANTHER" id="PTHR48099">
    <property type="entry name" value="C-1-TETRAHYDROFOLATE SYNTHASE, CYTOPLASMIC-RELATED"/>
    <property type="match status" value="1"/>
</dbReference>
<dbReference type="Pfam" id="PF00763">
    <property type="entry name" value="THF_DHG_CYH"/>
    <property type="match status" value="1"/>
</dbReference>
<dbReference type="Pfam" id="PF02882">
    <property type="entry name" value="THF_DHG_CYH_C"/>
    <property type="match status" value="1"/>
</dbReference>
<dbReference type="PRINTS" id="PR00085">
    <property type="entry name" value="THFDHDRGNASE"/>
</dbReference>
<dbReference type="SUPFAM" id="SSF53223">
    <property type="entry name" value="Aminoacid dehydrogenase-like, N-terminal domain"/>
    <property type="match status" value="1"/>
</dbReference>
<dbReference type="SUPFAM" id="SSF51735">
    <property type="entry name" value="NAD(P)-binding Rossmann-fold domains"/>
    <property type="match status" value="1"/>
</dbReference>
<dbReference type="PROSITE" id="PS00767">
    <property type="entry name" value="THF_DHG_CYH_2"/>
    <property type="match status" value="1"/>
</dbReference>
<comment type="function">
    <text evidence="1">Catalyzes the oxidation of 5,10-methylenetetrahydrofolate to 5,10-methenyltetrahydrofolate and then the hydrolysis of 5,10-methenyltetrahydrofolate to 10-formyltetrahydrofolate.</text>
</comment>
<comment type="catalytic activity">
    <reaction evidence="1">
        <text>(6R)-5,10-methylene-5,6,7,8-tetrahydrofolate + NADP(+) = (6R)-5,10-methenyltetrahydrofolate + NADPH</text>
        <dbReference type="Rhea" id="RHEA:22812"/>
        <dbReference type="ChEBI" id="CHEBI:15636"/>
        <dbReference type="ChEBI" id="CHEBI:57455"/>
        <dbReference type="ChEBI" id="CHEBI:57783"/>
        <dbReference type="ChEBI" id="CHEBI:58349"/>
        <dbReference type="EC" id="1.5.1.5"/>
    </reaction>
</comment>
<comment type="catalytic activity">
    <reaction evidence="1">
        <text>(6R)-5,10-methenyltetrahydrofolate + H2O = (6R)-10-formyltetrahydrofolate + H(+)</text>
        <dbReference type="Rhea" id="RHEA:23700"/>
        <dbReference type="ChEBI" id="CHEBI:15377"/>
        <dbReference type="ChEBI" id="CHEBI:15378"/>
        <dbReference type="ChEBI" id="CHEBI:57455"/>
        <dbReference type="ChEBI" id="CHEBI:195366"/>
        <dbReference type="EC" id="3.5.4.9"/>
    </reaction>
</comment>
<comment type="pathway">
    <text evidence="1">One-carbon metabolism; tetrahydrofolate interconversion.</text>
</comment>
<comment type="subunit">
    <text evidence="1">Homodimer.</text>
</comment>
<comment type="similarity">
    <text evidence="1">Belongs to the tetrahydrofolate dehydrogenase/cyclohydrolase family.</text>
</comment>
<comment type="sequence caution" evidence="2">
    <conflict type="erroneous initiation">
        <sequence resource="EMBL-CDS" id="ABB41319"/>
    </conflict>
</comment>